<organism>
    <name type="scientific">Danio rerio</name>
    <name type="common">Zebrafish</name>
    <name type="synonym">Brachydanio rerio</name>
    <dbReference type="NCBI Taxonomy" id="7955"/>
    <lineage>
        <taxon>Eukaryota</taxon>
        <taxon>Metazoa</taxon>
        <taxon>Chordata</taxon>
        <taxon>Craniata</taxon>
        <taxon>Vertebrata</taxon>
        <taxon>Euteleostomi</taxon>
        <taxon>Actinopterygii</taxon>
        <taxon>Neopterygii</taxon>
        <taxon>Teleostei</taxon>
        <taxon>Ostariophysi</taxon>
        <taxon>Cypriniformes</taxon>
        <taxon>Danionidae</taxon>
        <taxon>Danioninae</taxon>
        <taxon>Danio</taxon>
    </lineage>
</organism>
<comment type="function">
    <text evidence="1">E3 ubiquitin-protein ligase that regulates selective mitochondrial autophagy by mediating 'Lys-63'-linked polyubiquitination. Acts in the endoplasmic reticulum (ER)-associated degradation (ERAD) pathway, which targets misfolded proteins that accumulate in the endoplasmic reticulum (ER) for ubiquitination and subsequent proteasome-mediated degradation. Protects cells from ER stress-induced apoptosis. Responsible for the cotranslational ubiquitination and degradation of CFTR in the ERAD pathway. Also acts as a regulator of the innate antiviral response by catalyzing 'Lys-27'-linked polyubiquitination of CGAS, thereby promoting CGAS cyclic GMP-AMP synthase activity. Preferentially associates with the E2 enzymes UBE2J1 and UBE2J2 (By similarity).</text>
</comment>
<comment type="catalytic activity">
    <reaction evidence="1">
        <text>S-ubiquitinyl-[E2 ubiquitin-conjugating enzyme]-L-cysteine + [acceptor protein]-L-lysine = [E2 ubiquitin-conjugating enzyme]-L-cysteine + N(6)-ubiquitinyl-[acceptor protein]-L-lysine.</text>
        <dbReference type="EC" id="2.3.2.27"/>
    </reaction>
</comment>
<comment type="pathway">
    <text evidence="1">Protein modification; protein ubiquitination.</text>
</comment>
<comment type="subcellular location">
    <subcellularLocation>
        <location evidence="1">Mitochondrion outer membrane</location>
        <topology evidence="1">Multi-pass membrane protein</topology>
    </subcellularLocation>
    <subcellularLocation>
        <location evidence="1">Endoplasmic reticulum membrane</location>
        <topology evidence="1">Multi-pass membrane protein</topology>
    </subcellularLocation>
</comment>
<comment type="domain">
    <text evidence="1">The RING-type zinc finger domain is responsible for E3 ubiquitin ligase activity.</text>
</comment>
<name>RN185_DANRE</name>
<sequence length="194" mass="20520">MASAAASESSSSSSSSSAGAANGQSAGESGGGGAQDSTFECNICLDTSKDAVISLCGHLFCWPCLHQWLETRPNRQVCPVCKAGISRDKVIPLYGRGSTGQQDPREKTPPRPQGQRPEPENRGGFQGFGFGDGGFQMSFGIGAFPFGIFATAFNINDGRPPPAAPGTPQHTDEQFLSRLFLFVALLIMFWLLIA</sequence>
<protein>
    <recommendedName>
        <fullName>E3 ubiquitin-protein ligase RNF185</fullName>
        <ecNumber evidence="1">2.3.2.27</ecNumber>
    </recommendedName>
    <alternativeName>
        <fullName>RING finger protein 185</fullName>
    </alternativeName>
    <alternativeName>
        <fullName evidence="5">RING-type E3 ubiquitin transferase RNF185</fullName>
    </alternativeName>
</protein>
<reference key="1">
    <citation type="submission" date="2003-10" db="EMBL/GenBank/DDBJ databases">
        <authorList>
            <consortium name="NIH - Zebrafish Gene Collection (ZGC) project"/>
        </authorList>
    </citation>
    <scope>NUCLEOTIDE SEQUENCE [LARGE SCALE MRNA]</scope>
    <source>
        <tissue>Eye</tissue>
    </source>
</reference>
<gene>
    <name type="primary">rnf185</name>
    <name type="ORF">zgc:73070</name>
</gene>
<dbReference type="EC" id="2.3.2.27" evidence="1"/>
<dbReference type="EMBL" id="BC059445">
    <property type="protein sequence ID" value="AAH59445.1"/>
    <property type="molecule type" value="mRNA"/>
</dbReference>
<dbReference type="RefSeq" id="NP_998202.1">
    <property type="nucleotide sequence ID" value="NM_213037.1"/>
</dbReference>
<dbReference type="SMR" id="Q6PC78"/>
<dbReference type="FunCoup" id="Q6PC78">
    <property type="interactions" value="1056"/>
</dbReference>
<dbReference type="STRING" id="7955.ENSDARP00000046780"/>
<dbReference type="PaxDb" id="7955-ENSDARP00000046780"/>
<dbReference type="Ensembl" id="ENSDART00000046781">
    <property type="protein sequence ID" value="ENSDARP00000046780"/>
    <property type="gene ID" value="ENSDARG00000032997"/>
</dbReference>
<dbReference type="GeneID" id="406310"/>
<dbReference type="KEGG" id="dre:406310"/>
<dbReference type="AGR" id="ZFIN:ZDB-GENE-040426-1977"/>
<dbReference type="CTD" id="91445"/>
<dbReference type="ZFIN" id="ZDB-GENE-040426-1977">
    <property type="gene designation" value="rnf185"/>
</dbReference>
<dbReference type="eggNOG" id="KOG0823">
    <property type="taxonomic scope" value="Eukaryota"/>
</dbReference>
<dbReference type="HOGENOM" id="CLU_055198_2_2_1"/>
<dbReference type="InParanoid" id="Q6PC78"/>
<dbReference type="OMA" id="RPNRQTC"/>
<dbReference type="OrthoDB" id="302966at2759"/>
<dbReference type="PhylomeDB" id="Q6PC78"/>
<dbReference type="TreeFam" id="TF317334"/>
<dbReference type="Reactome" id="R-DRE-382556">
    <property type="pathway name" value="ABC-family proteins mediated transport"/>
</dbReference>
<dbReference type="UniPathway" id="UPA00143"/>
<dbReference type="PRO" id="PR:Q6PC78"/>
<dbReference type="Proteomes" id="UP000000437">
    <property type="component" value="Chromosome 5"/>
</dbReference>
<dbReference type="Bgee" id="ENSDARG00000032997">
    <property type="expression patterns" value="Expressed in mature ovarian follicle and 28 other cell types or tissues"/>
</dbReference>
<dbReference type="ExpressionAtlas" id="Q6PC78">
    <property type="expression patterns" value="baseline"/>
</dbReference>
<dbReference type="GO" id="GO:0005789">
    <property type="term" value="C:endoplasmic reticulum membrane"/>
    <property type="evidence" value="ECO:0007669"/>
    <property type="project" value="UniProtKB-SubCell"/>
</dbReference>
<dbReference type="GO" id="GO:0005741">
    <property type="term" value="C:mitochondrial outer membrane"/>
    <property type="evidence" value="ECO:0007669"/>
    <property type="project" value="UniProtKB-SubCell"/>
</dbReference>
<dbReference type="GO" id="GO:0061630">
    <property type="term" value="F:ubiquitin protein ligase activity"/>
    <property type="evidence" value="ECO:0000250"/>
    <property type="project" value="UniProtKB"/>
</dbReference>
<dbReference type="GO" id="GO:0044390">
    <property type="term" value="F:ubiquitin-like protein conjugating enzyme binding"/>
    <property type="evidence" value="ECO:0000318"/>
    <property type="project" value="GO_Central"/>
</dbReference>
<dbReference type="GO" id="GO:0008270">
    <property type="term" value="F:zinc ion binding"/>
    <property type="evidence" value="ECO:0007669"/>
    <property type="project" value="UniProtKB-KW"/>
</dbReference>
<dbReference type="GO" id="GO:0006914">
    <property type="term" value="P:autophagy"/>
    <property type="evidence" value="ECO:0007669"/>
    <property type="project" value="UniProtKB-KW"/>
</dbReference>
<dbReference type="GO" id="GO:0051607">
    <property type="term" value="P:defense response to virus"/>
    <property type="evidence" value="ECO:0000250"/>
    <property type="project" value="UniProtKB"/>
</dbReference>
<dbReference type="GO" id="GO:0036503">
    <property type="term" value="P:ERAD pathway"/>
    <property type="evidence" value="ECO:0000318"/>
    <property type="project" value="GO_Central"/>
</dbReference>
<dbReference type="GO" id="GO:0045087">
    <property type="term" value="P:innate immune response"/>
    <property type="evidence" value="ECO:0007669"/>
    <property type="project" value="UniProtKB-KW"/>
</dbReference>
<dbReference type="GO" id="GO:0060340">
    <property type="term" value="P:positive regulation of type I interferon-mediated signaling pathway"/>
    <property type="evidence" value="ECO:0000250"/>
    <property type="project" value="UniProtKB"/>
</dbReference>
<dbReference type="GO" id="GO:0044314">
    <property type="term" value="P:protein K27-linked ubiquitination"/>
    <property type="evidence" value="ECO:0000250"/>
    <property type="project" value="UniProtKB"/>
</dbReference>
<dbReference type="GO" id="GO:0006511">
    <property type="term" value="P:ubiquitin-dependent protein catabolic process"/>
    <property type="evidence" value="ECO:0000318"/>
    <property type="project" value="GO_Central"/>
</dbReference>
<dbReference type="CDD" id="cd16744">
    <property type="entry name" value="RING-HC_RNF185"/>
    <property type="match status" value="1"/>
</dbReference>
<dbReference type="FunFam" id="3.30.40.10:FF:000062">
    <property type="entry name" value="E3 ubiquitin-protein ligase RNF185"/>
    <property type="match status" value="1"/>
</dbReference>
<dbReference type="Gene3D" id="3.30.40.10">
    <property type="entry name" value="Zinc/RING finger domain, C3HC4 (zinc finger)"/>
    <property type="match status" value="1"/>
</dbReference>
<dbReference type="InterPro" id="IPR045103">
    <property type="entry name" value="RNF5/RNF185-like"/>
</dbReference>
<dbReference type="InterPro" id="IPR018957">
    <property type="entry name" value="Znf_C3HC4_RING-type"/>
</dbReference>
<dbReference type="InterPro" id="IPR001841">
    <property type="entry name" value="Znf_RING"/>
</dbReference>
<dbReference type="InterPro" id="IPR013083">
    <property type="entry name" value="Znf_RING/FYVE/PHD"/>
</dbReference>
<dbReference type="InterPro" id="IPR017907">
    <property type="entry name" value="Znf_RING_CS"/>
</dbReference>
<dbReference type="PANTHER" id="PTHR12313">
    <property type="entry name" value="E3 UBIQUITIN-PROTEIN LIGASE RNF5-RELATED"/>
    <property type="match status" value="1"/>
</dbReference>
<dbReference type="Pfam" id="PF00097">
    <property type="entry name" value="zf-C3HC4"/>
    <property type="match status" value="1"/>
</dbReference>
<dbReference type="SMART" id="SM00184">
    <property type="entry name" value="RING"/>
    <property type="match status" value="1"/>
</dbReference>
<dbReference type="SUPFAM" id="SSF57850">
    <property type="entry name" value="RING/U-box"/>
    <property type="match status" value="1"/>
</dbReference>
<dbReference type="PROSITE" id="PS00518">
    <property type="entry name" value="ZF_RING_1"/>
    <property type="match status" value="1"/>
</dbReference>
<dbReference type="PROSITE" id="PS50089">
    <property type="entry name" value="ZF_RING_2"/>
    <property type="match status" value="1"/>
</dbReference>
<evidence type="ECO:0000250" key="1">
    <source>
        <dbReference type="UniProtKB" id="Q96GF1"/>
    </source>
</evidence>
<evidence type="ECO:0000255" key="2"/>
<evidence type="ECO:0000255" key="3">
    <source>
        <dbReference type="PROSITE-ProRule" id="PRU00175"/>
    </source>
</evidence>
<evidence type="ECO:0000256" key="4">
    <source>
        <dbReference type="SAM" id="MobiDB-lite"/>
    </source>
</evidence>
<evidence type="ECO:0000305" key="5"/>
<accession>Q6PC78</accession>
<proteinExistence type="evidence at transcript level"/>
<feature type="chain" id="PRO_0000247525" description="E3 ubiquitin-protein ligase RNF185">
    <location>
        <begin position="1"/>
        <end position="194"/>
    </location>
</feature>
<feature type="transmembrane region" description="Helical" evidence="2">
    <location>
        <begin position="133"/>
        <end position="153"/>
    </location>
</feature>
<feature type="transmembrane region" description="Helical" evidence="2">
    <location>
        <begin position="174"/>
        <end position="194"/>
    </location>
</feature>
<feature type="zinc finger region" description="RING-type" evidence="3">
    <location>
        <begin position="41"/>
        <end position="82"/>
    </location>
</feature>
<feature type="region of interest" description="Disordered" evidence="4">
    <location>
        <begin position="1"/>
        <end position="32"/>
    </location>
</feature>
<feature type="region of interest" description="Required for ubiquitin ligase activity and protection against ER stress-induced cell death" evidence="1">
    <location>
        <begin position="31"/>
        <end position="82"/>
    </location>
</feature>
<feature type="region of interest" description="Disordered" evidence="4">
    <location>
        <begin position="92"/>
        <end position="126"/>
    </location>
</feature>
<feature type="compositionally biased region" description="Low complexity" evidence="4">
    <location>
        <begin position="1"/>
        <end position="27"/>
    </location>
</feature>
<keyword id="KW-0072">Autophagy</keyword>
<keyword id="KW-0256">Endoplasmic reticulum</keyword>
<keyword id="KW-0391">Immunity</keyword>
<keyword id="KW-0399">Innate immunity</keyword>
<keyword id="KW-0472">Membrane</keyword>
<keyword id="KW-0479">Metal-binding</keyword>
<keyword id="KW-0496">Mitochondrion</keyword>
<keyword id="KW-1000">Mitochondrion outer membrane</keyword>
<keyword id="KW-1185">Reference proteome</keyword>
<keyword id="KW-0808">Transferase</keyword>
<keyword id="KW-0812">Transmembrane</keyword>
<keyword id="KW-1133">Transmembrane helix</keyword>
<keyword id="KW-0833">Ubl conjugation pathway</keyword>
<keyword id="KW-0862">Zinc</keyword>
<keyword id="KW-0863">Zinc-finger</keyword>